<keyword id="KW-0067">ATP-binding</keyword>
<keyword id="KW-0997">Cell inner membrane</keyword>
<keyword id="KW-1003">Cell membrane</keyword>
<keyword id="KW-0472">Membrane</keyword>
<keyword id="KW-0547">Nucleotide-binding</keyword>
<keyword id="KW-1278">Translocase</keyword>
<keyword id="KW-0813">Transport</keyword>
<protein>
    <recommendedName>
        <fullName evidence="1">Lipoprotein-releasing system ATP-binding protein LolD</fullName>
        <ecNumber evidence="1">7.6.2.-</ecNumber>
    </recommendedName>
</protein>
<proteinExistence type="inferred from homology"/>
<reference key="1">
    <citation type="journal article" date="2005" name="BMC Genomics">
        <title>Bacterial genome adaptation to niches: divergence of the potential virulence genes in three Burkholderia species of different survival strategies.</title>
        <authorList>
            <person name="Kim H.S."/>
            <person name="Schell M.A."/>
            <person name="Yu Y."/>
            <person name="Ulrich R.L."/>
            <person name="Sarria S.H."/>
            <person name="Nierman W.C."/>
            <person name="DeShazer D."/>
        </authorList>
    </citation>
    <scope>NUCLEOTIDE SEQUENCE [LARGE SCALE GENOMIC DNA]</scope>
    <source>
        <strain>ATCC 700388 / DSM 13276 / CCUG 48851 / CIP 106301 / E264</strain>
    </source>
</reference>
<evidence type="ECO:0000255" key="1">
    <source>
        <dbReference type="HAMAP-Rule" id="MF_01708"/>
    </source>
</evidence>
<comment type="function">
    <text evidence="1">Part of the ABC transporter complex LolCDE involved in the translocation of mature outer membrane-directed lipoproteins, from the inner membrane to the periplasmic chaperone, LolA. Responsible for the formation of the LolA-lipoprotein complex in an ATP-dependent manner.</text>
</comment>
<comment type="subunit">
    <text evidence="1">The complex is composed of two ATP-binding proteins (LolD) and two transmembrane proteins (LolC and LolE).</text>
</comment>
<comment type="subcellular location">
    <subcellularLocation>
        <location evidence="1">Cell inner membrane</location>
        <topology evidence="1">Peripheral membrane protein</topology>
    </subcellularLocation>
</comment>
<comment type="similarity">
    <text evidence="1">Belongs to the ABC transporter superfamily. Lipoprotein translocase (TC 3.A.1.125) family.</text>
</comment>
<name>LOLD_BURTA</name>
<feature type="chain" id="PRO_0000272067" description="Lipoprotein-releasing system ATP-binding protein LolD">
    <location>
        <begin position="1"/>
        <end position="249"/>
    </location>
</feature>
<feature type="domain" description="ABC transporter" evidence="1">
    <location>
        <begin position="24"/>
        <end position="249"/>
    </location>
</feature>
<feature type="binding site" evidence="1">
    <location>
        <begin position="60"/>
        <end position="67"/>
    </location>
    <ligand>
        <name>ATP</name>
        <dbReference type="ChEBI" id="CHEBI:30616"/>
    </ligand>
</feature>
<organism>
    <name type="scientific">Burkholderia thailandensis (strain ATCC 700388 / DSM 13276 / CCUG 48851 / CIP 106301 / E264)</name>
    <dbReference type="NCBI Taxonomy" id="271848"/>
    <lineage>
        <taxon>Bacteria</taxon>
        <taxon>Pseudomonadati</taxon>
        <taxon>Pseudomonadota</taxon>
        <taxon>Betaproteobacteria</taxon>
        <taxon>Burkholderiales</taxon>
        <taxon>Burkholderiaceae</taxon>
        <taxon>Burkholderia</taxon>
        <taxon>pseudomallei group</taxon>
    </lineage>
</organism>
<accession>Q2SXD1</accession>
<sequence>MNDRVFEQTMNQNHQGGAARECVLEAHGITKTFMQGGFNVQVLDNAQVSVRRGEKLAIVGASGSGKSTLLHVLGGLDEPSAGQVSLLGKPFTQLAERERNDLRNRALGFVYQFHHLLPEFTALDNVAMPLRIRRMSAEEARHHAREMLEQVGLGARAKHRPGELSGGERQRVAIARALVTKPACVLADEPTGNLDGSTADHVFHLMLELSRTLDTSFVIVTHDPDLAARCDRILRLRDGVLHEEPAVPV</sequence>
<gene>
    <name evidence="1" type="primary">lolD</name>
    <name type="ordered locus">BTH_I1888</name>
</gene>
<dbReference type="EC" id="7.6.2.-" evidence="1"/>
<dbReference type="EMBL" id="CP000086">
    <property type="protein sequence ID" value="ABC36527.1"/>
    <property type="molecule type" value="Genomic_DNA"/>
</dbReference>
<dbReference type="RefSeq" id="WP_011402197.1">
    <property type="nucleotide sequence ID" value="NZ_CP008785.1"/>
</dbReference>
<dbReference type="SMR" id="Q2SXD1"/>
<dbReference type="GeneID" id="45121620"/>
<dbReference type="KEGG" id="bte:BTH_I1888"/>
<dbReference type="HOGENOM" id="CLU_000604_1_22_4"/>
<dbReference type="Proteomes" id="UP000001930">
    <property type="component" value="Chromosome I"/>
</dbReference>
<dbReference type="GO" id="GO:0005886">
    <property type="term" value="C:plasma membrane"/>
    <property type="evidence" value="ECO:0007669"/>
    <property type="project" value="UniProtKB-SubCell"/>
</dbReference>
<dbReference type="GO" id="GO:0005524">
    <property type="term" value="F:ATP binding"/>
    <property type="evidence" value="ECO:0007669"/>
    <property type="project" value="UniProtKB-KW"/>
</dbReference>
<dbReference type="GO" id="GO:0016887">
    <property type="term" value="F:ATP hydrolysis activity"/>
    <property type="evidence" value="ECO:0007669"/>
    <property type="project" value="InterPro"/>
</dbReference>
<dbReference type="GO" id="GO:0022857">
    <property type="term" value="F:transmembrane transporter activity"/>
    <property type="evidence" value="ECO:0007669"/>
    <property type="project" value="TreeGrafter"/>
</dbReference>
<dbReference type="GO" id="GO:0044874">
    <property type="term" value="P:lipoprotein localization to outer membrane"/>
    <property type="evidence" value="ECO:0007669"/>
    <property type="project" value="TreeGrafter"/>
</dbReference>
<dbReference type="GO" id="GO:0089705">
    <property type="term" value="P:protein localization to outer membrane"/>
    <property type="evidence" value="ECO:0007669"/>
    <property type="project" value="TreeGrafter"/>
</dbReference>
<dbReference type="CDD" id="cd03255">
    <property type="entry name" value="ABC_MJ0796_LolCDE_FtsE"/>
    <property type="match status" value="1"/>
</dbReference>
<dbReference type="FunFam" id="3.40.50.300:FF:000230">
    <property type="entry name" value="Lipoprotein-releasing system ATP-binding protein LolD"/>
    <property type="match status" value="1"/>
</dbReference>
<dbReference type="Gene3D" id="3.40.50.300">
    <property type="entry name" value="P-loop containing nucleotide triphosphate hydrolases"/>
    <property type="match status" value="1"/>
</dbReference>
<dbReference type="InterPro" id="IPR003593">
    <property type="entry name" value="AAA+_ATPase"/>
</dbReference>
<dbReference type="InterPro" id="IPR003439">
    <property type="entry name" value="ABC_transporter-like_ATP-bd"/>
</dbReference>
<dbReference type="InterPro" id="IPR017871">
    <property type="entry name" value="ABC_transporter-like_CS"/>
</dbReference>
<dbReference type="InterPro" id="IPR015854">
    <property type="entry name" value="ABC_transpr_LolD-like"/>
</dbReference>
<dbReference type="InterPro" id="IPR011924">
    <property type="entry name" value="LolD_lipo_ATP-bd"/>
</dbReference>
<dbReference type="InterPro" id="IPR017911">
    <property type="entry name" value="MacB-like_ATP-bd"/>
</dbReference>
<dbReference type="InterPro" id="IPR027417">
    <property type="entry name" value="P-loop_NTPase"/>
</dbReference>
<dbReference type="NCBIfam" id="TIGR02211">
    <property type="entry name" value="LolD_lipo_ex"/>
    <property type="match status" value="1"/>
</dbReference>
<dbReference type="PANTHER" id="PTHR24220">
    <property type="entry name" value="IMPORT ATP-BINDING PROTEIN"/>
    <property type="match status" value="1"/>
</dbReference>
<dbReference type="PANTHER" id="PTHR24220:SF689">
    <property type="entry name" value="LIPOPROTEIN-RELEASING SYSTEM ATP-BINDING PROTEIN LOLD"/>
    <property type="match status" value="1"/>
</dbReference>
<dbReference type="Pfam" id="PF00005">
    <property type="entry name" value="ABC_tran"/>
    <property type="match status" value="1"/>
</dbReference>
<dbReference type="SMART" id="SM00382">
    <property type="entry name" value="AAA"/>
    <property type="match status" value="1"/>
</dbReference>
<dbReference type="SUPFAM" id="SSF52540">
    <property type="entry name" value="P-loop containing nucleoside triphosphate hydrolases"/>
    <property type="match status" value="1"/>
</dbReference>
<dbReference type="PROSITE" id="PS00211">
    <property type="entry name" value="ABC_TRANSPORTER_1"/>
    <property type="match status" value="1"/>
</dbReference>
<dbReference type="PROSITE" id="PS50893">
    <property type="entry name" value="ABC_TRANSPORTER_2"/>
    <property type="match status" value="1"/>
</dbReference>
<dbReference type="PROSITE" id="PS51244">
    <property type="entry name" value="LOLD"/>
    <property type="match status" value="1"/>
</dbReference>